<proteinExistence type="inferred from homology"/>
<name>MURB_LACP7</name>
<comment type="function">
    <text evidence="1">Cell wall formation.</text>
</comment>
<comment type="catalytic activity">
    <reaction evidence="1">
        <text>UDP-N-acetyl-alpha-D-muramate + NADP(+) = UDP-N-acetyl-3-O-(1-carboxyvinyl)-alpha-D-glucosamine + NADPH + H(+)</text>
        <dbReference type="Rhea" id="RHEA:12248"/>
        <dbReference type="ChEBI" id="CHEBI:15378"/>
        <dbReference type="ChEBI" id="CHEBI:57783"/>
        <dbReference type="ChEBI" id="CHEBI:58349"/>
        <dbReference type="ChEBI" id="CHEBI:68483"/>
        <dbReference type="ChEBI" id="CHEBI:70757"/>
        <dbReference type="EC" id="1.3.1.98"/>
    </reaction>
</comment>
<comment type="cofactor">
    <cofactor evidence="1">
        <name>FAD</name>
        <dbReference type="ChEBI" id="CHEBI:57692"/>
    </cofactor>
</comment>
<comment type="pathway">
    <text evidence="1">Cell wall biogenesis; peptidoglycan biosynthesis.</text>
</comment>
<comment type="subcellular location">
    <subcellularLocation>
        <location evidence="1">Cytoplasm</location>
    </subcellularLocation>
</comment>
<comment type="similarity">
    <text evidence="1">Belongs to the MurB family.</text>
</comment>
<protein>
    <recommendedName>
        <fullName evidence="1">UDP-N-acetylenolpyruvoylglucosamine reductase</fullName>
        <ecNumber evidence="1">1.3.1.98</ecNumber>
    </recommendedName>
    <alternativeName>
        <fullName evidence="1">UDP-N-acetylmuramate dehydrogenase</fullName>
    </alternativeName>
</protein>
<reference key="1">
    <citation type="submission" date="2007-11" db="EMBL/GenBank/DDBJ databases">
        <title>Complete genome sequence of Clostridium phytofermentans ISDg.</title>
        <authorList>
            <person name="Leschine S.B."/>
            <person name="Warnick T.A."/>
            <person name="Blanchard J.L."/>
            <person name="Schnell D.J."/>
            <person name="Petit E.L."/>
            <person name="LaTouf W.G."/>
            <person name="Copeland A."/>
            <person name="Lucas S."/>
            <person name="Lapidus A."/>
            <person name="Barry K."/>
            <person name="Glavina del Rio T."/>
            <person name="Dalin E."/>
            <person name="Tice H."/>
            <person name="Pitluck S."/>
            <person name="Kiss H."/>
            <person name="Brettin T."/>
            <person name="Bruce D."/>
            <person name="Detter J.C."/>
            <person name="Han C."/>
            <person name="Kuske C."/>
            <person name="Schmutz J."/>
            <person name="Larimer F."/>
            <person name="Land M."/>
            <person name="Hauser L."/>
            <person name="Kyrpides N."/>
            <person name="Kim E.A."/>
            <person name="Richardson P."/>
        </authorList>
    </citation>
    <scope>NUCLEOTIDE SEQUENCE [LARGE SCALE GENOMIC DNA]</scope>
    <source>
        <strain>ATCC 700394 / DSM 18823 / ISDg</strain>
    </source>
</reference>
<keyword id="KW-0131">Cell cycle</keyword>
<keyword id="KW-0132">Cell division</keyword>
<keyword id="KW-0133">Cell shape</keyword>
<keyword id="KW-0961">Cell wall biogenesis/degradation</keyword>
<keyword id="KW-0963">Cytoplasm</keyword>
<keyword id="KW-0274">FAD</keyword>
<keyword id="KW-0285">Flavoprotein</keyword>
<keyword id="KW-0521">NADP</keyword>
<keyword id="KW-0560">Oxidoreductase</keyword>
<keyword id="KW-0573">Peptidoglycan synthesis</keyword>
<keyword id="KW-1185">Reference proteome</keyword>
<sequence>MNNVILQELKNIVSTERVTCNEPLSKHTSFKIGGPADYFVITKKIEETAAVIQCCNQHNLPLLMIGKGSNLLISDAGIRGVVLKQEDNTEGFFVTQCEEGYLVTGGAGMNLSAFAMKIANESLTGFEFAAGIPGSLGGAVYMNAGAYGGEIKDCIKSARVLTKEGQILSLNREELELSYRSSIIQKKGYYVIDATFLLQKGNQEDILRKIEELNQARKDKQPLEYPSAGSTFKRPEGYFAGKLIMDAGLRGYRVGGAMVSEKHCGFVINTGDATAKDVLQLIDDVRRIVKEKFGVTLEPEVRLIGEKVNP</sequence>
<evidence type="ECO:0000255" key="1">
    <source>
        <dbReference type="HAMAP-Rule" id="MF_00037"/>
    </source>
</evidence>
<organism>
    <name type="scientific">Lachnoclostridium phytofermentans (strain ATCC 700394 / DSM 18823 / ISDg)</name>
    <name type="common">Clostridium phytofermentans</name>
    <dbReference type="NCBI Taxonomy" id="357809"/>
    <lineage>
        <taxon>Bacteria</taxon>
        <taxon>Bacillati</taxon>
        <taxon>Bacillota</taxon>
        <taxon>Clostridia</taxon>
        <taxon>Lachnospirales</taxon>
        <taxon>Lachnospiraceae</taxon>
    </lineage>
</organism>
<dbReference type="EC" id="1.3.1.98" evidence="1"/>
<dbReference type="EMBL" id="CP000885">
    <property type="protein sequence ID" value="ABX40717.1"/>
    <property type="molecule type" value="Genomic_DNA"/>
</dbReference>
<dbReference type="RefSeq" id="WP_012198360.1">
    <property type="nucleotide sequence ID" value="NC_010001.1"/>
</dbReference>
<dbReference type="SMR" id="A9KSS3"/>
<dbReference type="STRING" id="357809.Cphy_0330"/>
<dbReference type="KEGG" id="cpy:Cphy_0330"/>
<dbReference type="eggNOG" id="COG0812">
    <property type="taxonomic scope" value="Bacteria"/>
</dbReference>
<dbReference type="HOGENOM" id="CLU_035304_1_1_9"/>
<dbReference type="OrthoDB" id="9804753at2"/>
<dbReference type="UniPathway" id="UPA00219"/>
<dbReference type="Proteomes" id="UP000000370">
    <property type="component" value="Chromosome"/>
</dbReference>
<dbReference type="GO" id="GO:0005829">
    <property type="term" value="C:cytosol"/>
    <property type="evidence" value="ECO:0007669"/>
    <property type="project" value="TreeGrafter"/>
</dbReference>
<dbReference type="GO" id="GO:0071949">
    <property type="term" value="F:FAD binding"/>
    <property type="evidence" value="ECO:0007669"/>
    <property type="project" value="InterPro"/>
</dbReference>
<dbReference type="GO" id="GO:0008762">
    <property type="term" value="F:UDP-N-acetylmuramate dehydrogenase activity"/>
    <property type="evidence" value="ECO:0007669"/>
    <property type="project" value="UniProtKB-UniRule"/>
</dbReference>
<dbReference type="GO" id="GO:0051301">
    <property type="term" value="P:cell division"/>
    <property type="evidence" value="ECO:0007669"/>
    <property type="project" value="UniProtKB-KW"/>
</dbReference>
<dbReference type="GO" id="GO:0071555">
    <property type="term" value="P:cell wall organization"/>
    <property type="evidence" value="ECO:0007669"/>
    <property type="project" value="UniProtKB-KW"/>
</dbReference>
<dbReference type="GO" id="GO:0009252">
    <property type="term" value="P:peptidoglycan biosynthetic process"/>
    <property type="evidence" value="ECO:0007669"/>
    <property type="project" value="UniProtKB-UniRule"/>
</dbReference>
<dbReference type="GO" id="GO:0008360">
    <property type="term" value="P:regulation of cell shape"/>
    <property type="evidence" value="ECO:0007669"/>
    <property type="project" value="UniProtKB-KW"/>
</dbReference>
<dbReference type="Gene3D" id="3.30.465.10">
    <property type="match status" value="1"/>
</dbReference>
<dbReference type="Gene3D" id="3.90.78.10">
    <property type="entry name" value="UDP-N-acetylenolpyruvoylglucosamine reductase, C-terminal domain"/>
    <property type="match status" value="1"/>
</dbReference>
<dbReference type="Gene3D" id="3.30.43.10">
    <property type="entry name" value="Uridine Diphospho-n-acetylenolpyruvylglucosamine Reductase, domain 2"/>
    <property type="match status" value="1"/>
</dbReference>
<dbReference type="HAMAP" id="MF_00037">
    <property type="entry name" value="MurB"/>
    <property type="match status" value="1"/>
</dbReference>
<dbReference type="InterPro" id="IPR016166">
    <property type="entry name" value="FAD-bd_PCMH"/>
</dbReference>
<dbReference type="InterPro" id="IPR036318">
    <property type="entry name" value="FAD-bd_PCMH-like_sf"/>
</dbReference>
<dbReference type="InterPro" id="IPR016167">
    <property type="entry name" value="FAD-bd_PCMH_sub1"/>
</dbReference>
<dbReference type="InterPro" id="IPR016169">
    <property type="entry name" value="FAD-bd_PCMH_sub2"/>
</dbReference>
<dbReference type="InterPro" id="IPR003170">
    <property type="entry name" value="MurB"/>
</dbReference>
<dbReference type="InterPro" id="IPR011601">
    <property type="entry name" value="MurB_C"/>
</dbReference>
<dbReference type="InterPro" id="IPR036635">
    <property type="entry name" value="MurB_C_sf"/>
</dbReference>
<dbReference type="InterPro" id="IPR006094">
    <property type="entry name" value="Oxid_FAD_bind_N"/>
</dbReference>
<dbReference type="NCBIfam" id="TIGR00179">
    <property type="entry name" value="murB"/>
    <property type="match status" value="1"/>
</dbReference>
<dbReference type="NCBIfam" id="NF010480">
    <property type="entry name" value="PRK13905.1"/>
    <property type="match status" value="1"/>
</dbReference>
<dbReference type="PANTHER" id="PTHR21071">
    <property type="entry name" value="UDP-N-ACETYLENOLPYRUVOYLGLUCOSAMINE REDUCTASE"/>
    <property type="match status" value="1"/>
</dbReference>
<dbReference type="PANTHER" id="PTHR21071:SF4">
    <property type="entry name" value="UDP-N-ACETYLENOLPYRUVOYLGLUCOSAMINE REDUCTASE"/>
    <property type="match status" value="1"/>
</dbReference>
<dbReference type="Pfam" id="PF01565">
    <property type="entry name" value="FAD_binding_4"/>
    <property type="match status" value="1"/>
</dbReference>
<dbReference type="Pfam" id="PF02873">
    <property type="entry name" value="MurB_C"/>
    <property type="match status" value="1"/>
</dbReference>
<dbReference type="SUPFAM" id="SSF56176">
    <property type="entry name" value="FAD-binding/transporter-associated domain-like"/>
    <property type="match status" value="1"/>
</dbReference>
<dbReference type="SUPFAM" id="SSF56194">
    <property type="entry name" value="Uridine diphospho-N-Acetylenolpyruvylglucosamine reductase, MurB, C-terminal domain"/>
    <property type="match status" value="1"/>
</dbReference>
<dbReference type="PROSITE" id="PS51387">
    <property type="entry name" value="FAD_PCMH"/>
    <property type="match status" value="1"/>
</dbReference>
<feature type="chain" id="PRO_0000332454" description="UDP-N-acetylenolpyruvoylglucosamine reductase">
    <location>
        <begin position="1"/>
        <end position="310"/>
    </location>
</feature>
<feature type="domain" description="FAD-binding PCMH-type" evidence="1">
    <location>
        <begin position="31"/>
        <end position="216"/>
    </location>
</feature>
<feature type="active site" evidence="1">
    <location>
        <position position="180"/>
    </location>
</feature>
<feature type="active site" description="Proton donor" evidence="1">
    <location>
        <position position="230"/>
    </location>
</feature>
<feature type="active site" evidence="1">
    <location>
        <position position="300"/>
    </location>
</feature>
<accession>A9KSS3</accession>
<gene>
    <name evidence="1" type="primary">murB</name>
    <name type="ordered locus">Cphy_0330</name>
</gene>